<sequence>MNALTLPDVAAQAARQALPLEWVGMCGIALPVFIEGQRLAAKADAGVSLDDGDARGIHMSRLYLGLEAMEQQNLSPALLRQVLQRFLDSHEDLSEAAYLNIHIDLLLRRPALVSPLAGWKNYPVTVSAQLKNKVFHVELKIDVAYSSTCPCSAALARQLIQQQFVDDFANKPLQHADVLAWLGSTQGIVATPHSQRSTAQLHLHLDEFVDELPLTSIINDAEAALGTAVQTAVKRADEQAFALANGQNLMFCEDAARRLNLALRGSPGISQFHVRVIHAESLHAHDAVAESHWRREQP</sequence>
<protein>
    <recommendedName>
        <fullName evidence="1">GTP cyclohydrolase FolE2</fullName>
        <ecNumber evidence="1">3.5.4.16</ecNumber>
    </recommendedName>
</protein>
<comment type="function">
    <text evidence="1">Converts GTP to 7,8-dihydroneopterin triphosphate.</text>
</comment>
<comment type="catalytic activity">
    <reaction evidence="1">
        <text>GTP + H2O = 7,8-dihydroneopterin 3'-triphosphate + formate + H(+)</text>
        <dbReference type="Rhea" id="RHEA:17473"/>
        <dbReference type="ChEBI" id="CHEBI:15377"/>
        <dbReference type="ChEBI" id="CHEBI:15378"/>
        <dbReference type="ChEBI" id="CHEBI:15740"/>
        <dbReference type="ChEBI" id="CHEBI:37565"/>
        <dbReference type="ChEBI" id="CHEBI:58462"/>
        <dbReference type="EC" id="3.5.4.16"/>
    </reaction>
</comment>
<comment type="pathway">
    <text evidence="1">Cofactor biosynthesis; 7,8-dihydroneopterin triphosphate biosynthesis; 7,8-dihydroneopterin triphosphate from GTP: step 1/1.</text>
</comment>
<comment type="similarity">
    <text evidence="1">Belongs to the GTP cyclohydrolase IV family.</text>
</comment>
<reference key="1">
    <citation type="journal article" date="2009" name="Genome Biol.">
        <title>Genomic and genetic analyses of diversity and plant interactions of Pseudomonas fluorescens.</title>
        <authorList>
            <person name="Silby M.W."/>
            <person name="Cerdeno-Tarraga A.M."/>
            <person name="Vernikos G.S."/>
            <person name="Giddens S.R."/>
            <person name="Jackson R.W."/>
            <person name="Preston G.M."/>
            <person name="Zhang X.-X."/>
            <person name="Moon C.D."/>
            <person name="Gehrig S.M."/>
            <person name="Godfrey S.A.C."/>
            <person name="Knight C.G."/>
            <person name="Malone J.G."/>
            <person name="Robinson Z."/>
            <person name="Spiers A.J."/>
            <person name="Harris S."/>
            <person name="Challis G.L."/>
            <person name="Yaxley A.M."/>
            <person name="Harris D."/>
            <person name="Seeger K."/>
            <person name="Murphy L."/>
            <person name="Rutter S."/>
            <person name="Squares R."/>
            <person name="Quail M.A."/>
            <person name="Saunders E."/>
            <person name="Mavromatis K."/>
            <person name="Brettin T.S."/>
            <person name="Bentley S.D."/>
            <person name="Hothersall J."/>
            <person name="Stephens E."/>
            <person name="Thomas C.M."/>
            <person name="Parkhill J."/>
            <person name="Levy S.B."/>
            <person name="Rainey P.B."/>
            <person name="Thomson N.R."/>
        </authorList>
    </citation>
    <scope>NUCLEOTIDE SEQUENCE [LARGE SCALE GENOMIC DNA]</scope>
    <source>
        <strain>Pf0-1</strain>
    </source>
</reference>
<dbReference type="EC" id="3.5.4.16" evidence="1"/>
<dbReference type="EMBL" id="CP000094">
    <property type="protein sequence ID" value="ABA77394.1"/>
    <property type="molecule type" value="Genomic_DNA"/>
</dbReference>
<dbReference type="RefSeq" id="WP_011336651.1">
    <property type="nucleotide sequence ID" value="NC_007492.2"/>
</dbReference>
<dbReference type="SMR" id="Q3K4B0"/>
<dbReference type="KEGG" id="pfo:Pfl01_5658"/>
<dbReference type="eggNOG" id="COG1469">
    <property type="taxonomic scope" value="Bacteria"/>
</dbReference>
<dbReference type="HOGENOM" id="CLU_062816_0_0_6"/>
<dbReference type="UniPathway" id="UPA00848">
    <property type="reaction ID" value="UER00151"/>
</dbReference>
<dbReference type="Proteomes" id="UP000002704">
    <property type="component" value="Chromosome"/>
</dbReference>
<dbReference type="GO" id="GO:0003934">
    <property type="term" value="F:GTP cyclohydrolase I activity"/>
    <property type="evidence" value="ECO:0007669"/>
    <property type="project" value="UniProtKB-UniRule"/>
</dbReference>
<dbReference type="GO" id="GO:0046654">
    <property type="term" value="P:tetrahydrofolate biosynthetic process"/>
    <property type="evidence" value="ECO:0007669"/>
    <property type="project" value="UniProtKB-UniRule"/>
</dbReference>
<dbReference type="Gene3D" id="3.10.270.10">
    <property type="entry name" value="Urate Oxidase"/>
    <property type="match status" value="1"/>
</dbReference>
<dbReference type="HAMAP" id="MF_01527_B">
    <property type="entry name" value="GTP_cyclohydrol_B"/>
    <property type="match status" value="1"/>
</dbReference>
<dbReference type="InterPro" id="IPR022838">
    <property type="entry name" value="GTP_cyclohydrolase_FolE2"/>
</dbReference>
<dbReference type="InterPro" id="IPR003801">
    <property type="entry name" value="GTP_cyclohydrolase_FolE2/MptA"/>
</dbReference>
<dbReference type="NCBIfam" id="NF010200">
    <property type="entry name" value="PRK13674.1-1"/>
    <property type="match status" value="1"/>
</dbReference>
<dbReference type="PANTHER" id="PTHR36445">
    <property type="entry name" value="GTP CYCLOHYDROLASE MPTA"/>
    <property type="match status" value="1"/>
</dbReference>
<dbReference type="PANTHER" id="PTHR36445:SF1">
    <property type="entry name" value="GTP CYCLOHYDROLASE MPTA"/>
    <property type="match status" value="1"/>
</dbReference>
<dbReference type="Pfam" id="PF02649">
    <property type="entry name" value="GCHY-1"/>
    <property type="match status" value="1"/>
</dbReference>
<proteinExistence type="inferred from homology"/>
<organism>
    <name type="scientific">Pseudomonas fluorescens (strain Pf0-1)</name>
    <dbReference type="NCBI Taxonomy" id="205922"/>
    <lineage>
        <taxon>Bacteria</taxon>
        <taxon>Pseudomonadati</taxon>
        <taxon>Pseudomonadota</taxon>
        <taxon>Gammaproteobacteria</taxon>
        <taxon>Pseudomonadales</taxon>
        <taxon>Pseudomonadaceae</taxon>
        <taxon>Pseudomonas</taxon>
    </lineage>
</organism>
<keyword id="KW-0378">Hydrolase</keyword>
<name>GCH4_PSEPF</name>
<feature type="chain" id="PRO_0000289510" description="GTP cyclohydrolase FolE2">
    <location>
        <begin position="1"/>
        <end position="298"/>
    </location>
</feature>
<feature type="site" description="May be catalytically important" evidence="1">
    <location>
        <position position="149"/>
    </location>
</feature>
<gene>
    <name evidence="1" type="primary">folE2</name>
    <name type="ordered locus">Pfl01_5658</name>
</gene>
<evidence type="ECO:0000255" key="1">
    <source>
        <dbReference type="HAMAP-Rule" id="MF_01527"/>
    </source>
</evidence>
<accession>Q3K4B0</accession>